<dbReference type="EMBL" id="CP000653">
    <property type="protein sequence ID" value="ABP62382.1"/>
    <property type="molecule type" value="Genomic_DNA"/>
</dbReference>
<dbReference type="RefSeq" id="WP_015960703.1">
    <property type="nucleotide sequence ID" value="NC_009436.1"/>
</dbReference>
<dbReference type="SMR" id="A4WFA2"/>
<dbReference type="STRING" id="399742.Ent638_3725"/>
<dbReference type="GeneID" id="93306700"/>
<dbReference type="KEGG" id="ent:Ent638_3725"/>
<dbReference type="eggNOG" id="COG0203">
    <property type="taxonomic scope" value="Bacteria"/>
</dbReference>
<dbReference type="HOGENOM" id="CLU_074407_2_0_6"/>
<dbReference type="OrthoDB" id="9809073at2"/>
<dbReference type="Proteomes" id="UP000000230">
    <property type="component" value="Chromosome"/>
</dbReference>
<dbReference type="GO" id="GO:0022625">
    <property type="term" value="C:cytosolic large ribosomal subunit"/>
    <property type="evidence" value="ECO:0007669"/>
    <property type="project" value="TreeGrafter"/>
</dbReference>
<dbReference type="GO" id="GO:0003735">
    <property type="term" value="F:structural constituent of ribosome"/>
    <property type="evidence" value="ECO:0007669"/>
    <property type="project" value="InterPro"/>
</dbReference>
<dbReference type="GO" id="GO:0006412">
    <property type="term" value="P:translation"/>
    <property type="evidence" value="ECO:0007669"/>
    <property type="project" value="UniProtKB-UniRule"/>
</dbReference>
<dbReference type="FunFam" id="3.90.1030.10:FF:000001">
    <property type="entry name" value="50S ribosomal protein L17"/>
    <property type="match status" value="1"/>
</dbReference>
<dbReference type="Gene3D" id="3.90.1030.10">
    <property type="entry name" value="Ribosomal protein L17"/>
    <property type="match status" value="1"/>
</dbReference>
<dbReference type="HAMAP" id="MF_01368">
    <property type="entry name" value="Ribosomal_bL17"/>
    <property type="match status" value="1"/>
</dbReference>
<dbReference type="InterPro" id="IPR000456">
    <property type="entry name" value="Ribosomal_bL17"/>
</dbReference>
<dbReference type="InterPro" id="IPR047859">
    <property type="entry name" value="Ribosomal_bL17_CS"/>
</dbReference>
<dbReference type="InterPro" id="IPR036373">
    <property type="entry name" value="Ribosomal_bL17_sf"/>
</dbReference>
<dbReference type="NCBIfam" id="TIGR00059">
    <property type="entry name" value="L17"/>
    <property type="match status" value="1"/>
</dbReference>
<dbReference type="PANTHER" id="PTHR14413:SF16">
    <property type="entry name" value="LARGE RIBOSOMAL SUBUNIT PROTEIN BL17M"/>
    <property type="match status" value="1"/>
</dbReference>
<dbReference type="PANTHER" id="PTHR14413">
    <property type="entry name" value="RIBOSOMAL PROTEIN L17"/>
    <property type="match status" value="1"/>
</dbReference>
<dbReference type="Pfam" id="PF01196">
    <property type="entry name" value="Ribosomal_L17"/>
    <property type="match status" value="1"/>
</dbReference>
<dbReference type="SUPFAM" id="SSF64263">
    <property type="entry name" value="Prokaryotic ribosomal protein L17"/>
    <property type="match status" value="1"/>
</dbReference>
<dbReference type="PROSITE" id="PS01167">
    <property type="entry name" value="RIBOSOMAL_L17"/>
    <property type="match status" value="1"/>
</dbReference>
<keyword id="KW-0687">Ribonucleoprotein</keyword>
<keyword id="KW-0689">Ribosomal protein</keyword>
<name>RL17_ENT38</name>
<comment type="subunit">
    <text evidence="1">Part of the 50S ribosomal subunit. Contacts protein L32.</text>
</comment>
<comment type="similarity">
    <text evidence="1">Belongs to the bacterial ribosomal protein bL17 family.</text>
</comment>
<evidence type="ECO:0000255" key="1">
    <source>
        <dbReference type="HAMAP-Rule" id="MF_01368"/>
    </source>
</evidence>
<evidence type="ECO:0000305" key="2"/>
<organism>
    <name type="scientific">Enterobacter sp. (strain 638)</name>
    <dbReference type="NCBI Taxonomy" id="399742"/>
    <lineage>
        <taxon>Bacteria</taxon>
        <taxon>Pseudomonadati</taxon>
        <taxon>Pseudomonadota</taxon>
        <taxon>Gammaproteobacteria</taxon>
        <taxon>Enterobacterales</taxon>
        <taxon>Enterobacteriaceae</taxon>
        <taxon>Enterobacter</taxon>
    </lineage>
</organism>
<feature type="chain" id="PRO_1000068021" description="Large ribosomal subunit protein bL17">
    <location>
        <begin position="1"/>
        <end position="128"/>
    </location>
</feature>
<accession>A4WFA2</accession>
<gene>
    <name evidence="1" type="primary">rplQ</name>
    <name type="ordered locus">Ent638_3725</name>
</gene>
<sequence>MRHRKSGRQLNRNSSHRQAMFRNMAGSLVRHEIIKTTLPKAKELRRVVEPLITLAKTDSVANRRLAFARTRDNEIVAKLFNELGPRFASRAGGYTRILKCGFRAGDNAPMAYIELVDRSESKAEATAE</sequence>
<protein>
    <recommendedName>
        <fullName evidence="1">Large ribosomal subunit protein bL17</fullName>
    </recommendedName>
    <alternativeName>
        <fullName evidence="2">50S ribosomal protein L17</fullName>
    </alternativeName>
</protein>
<reference key="1">
    <citation type="journal article" date="2010" name="PLoS Genet.">
        <title>Genome sequence of the plant growth promoting endophytic bacterium Enterobacter sp. 638.</title>
        <authorList>
            <person name="Taghavi S."/>
            <person name="van der Lelie D."/>
            <person name="Hoffman A."/>
            <person name="Zhang Y.B."/>
            <person name="Walla M.D."/>
            <person name="Vangronsveld J."/>
            <person name="Newman L."/>
            <person name="Monchy S."/>
        </authorList>
    </citation>
    <scope>NUCLEOTIDE SEQUENCE [LARGE SCALE GENOMIC DNA]</scope>
    <source>
        <strain>638</strain>
    </source>
</reference>
<proteinExistence type="inferred from homology"/>